<evidence type="ECO:0000255" key="1">
    <source>
        <dbReference type="HAMAP-Rule" id="MF_00096"/>
    </source>
</evidence>
<gene>
    <name evidence="1" type="primary">mutS</name>
    <name type="ordered locus">lpp1768</name>
</gene>
<dbReference type="EMBL" id="CR628336">
    <property type="protein sequence ID" value="CAH12920.1"/>
    <property type="molecule type" value="Genomic_DNA"/>
</dbReference>
<dbReference type="RefSeq" id="WP_011214063.1">
    <property type="nucleotide sequence ID" value="NC_006368.1"/>
</dbReference>
<dbReference type="SMR" id="Q5X4B2"/>
<dbReference type="KEGG" id="lpp:lpp1768"/>
<dbReference type="LegioList" id="lpp1768"/>
<dbReference type="HOGENOM" id="CLU_002472_4_0_6"/>
<dbReference type="GO" id="GO:0005829">
    <property type="term" value="C:cytosol"/>
    <property type="evidence" value="ECO:0007669"/>
    <property type="project" value="TreeGrafter"/>
</dbReference>
<dbReference type="GO" id="GO:0005524">
    <property type="term" value="F:ATP binding"/>
    <property type="evidence" value="ECO:0007669"/>
    <property type="project" value="UniProtKB-UniRule"/>
</dbReference>
<dbReference type="GO" id="GO:0140664">
    <property type="term" value="F:ATP-dependent DNA damage sensor activity"/>
    <property type="evidence" value="ECO:0007669"/>
    <property type="project" value="InterPro"/>
</dbReference>
<dbReference type="GO" id="GO:0003684">
    <property type="term" value="F:damaged DNA binding"/>
    <property type="evidence" value="ECO:0007669"/>
    <property type="project" value="UniProtKB-UniRule"/>
</dbReference>
<dbReference type="GO" id="GO:0030983">
    <property type="term" value="F:mismatched DNA binding"/>
    <property type="evidence" value="ECO:0007669"/>
    <property type="project" value="InterPro"/>
</dbReference>
<dbReference type="GO" id="GO:0006298">
    <property type="term" value="P:mismatch repair"/>
    <property type="evidence" value="ECO:0007669"/>
    <property type="project" value="UniProtKB-UniRule"/>
</dbReference>
<dbReference type="CDD" id="cd03284">
    <property type="entry name" value="ABC_MutS1"/>
    <property type="match status" value="1"/>
</dbReference>
<dbReference type="FunFam" id="1.10.1420.10:FF:000002">
    <property type="entry name" value="DNA mismatch repair protein MutS"/>
    <property type="match status" value="1"/>
</dbReference>
<dbReference type="FunFam" id="3.40.1170.10:FF:000001">
    <property type="entry name" value="DNA mismatch repair protein MutS"/>
    <property type="match status" value="1"/>
</dbReference>
<dbReference type="FunFam" id="3.40.50.300:FF:000870">
    <property type="entry name" value="MutS protein homolog 4"/>
    <property type="match status" value="1"/>
</dbReference>
<dbReference type="Gene3D" id="1.10.1420.10">
    <property type="match status" value="2"/>
</dbReference>
<dbReference type="Gene3D" id="6.10.140.430">
    <property type="match status" value="1"/>
</dbReference>
<dbReference type="Gene3D" id="3.40.1170.10">
    <property type="entry name" value="DNA repair protein MutS, domain I"/>
    <property type="match status" value="1"/>
</dbReference>
<dbReference type="Gene3D" id="3.30.420.110">
    <property type="entry name" value="MutS, connector domain"/>
    <property type="match status" value="1"/>
</dbReference>
<dbReference type="Gene3D" id="3.40.50.300">
    <property type="entry name" value="P-loop containing nucleotide triphosphate hydrolases"/>
    <property type="match status" value="1"/>
</dbReference>
<dbReference type="HAMAP" id="MF_00096">
    <property type="entry name" value="MutS"/>
    <property type="match status" value="1"/>
</dbReference>
<dbReference type="InterPro" id="IPR005748">
    <property type="entry name" value="DNA_mismatch_repair_MutS"/>
</dbReference>
<dbReference type="InterPro" id="IPR007695">
    <property type="entry name" value="DNA_mismatch_repair_MutS-lik_N"/>
</dbReference>
<dbReference type="InterPro" id="IPR017261">
    <property type="entry name" value="DNA_mismatch_repair_MutS/MSH"/>
</dbReference>
<dbReference type="InterPro" id="IPR000432">
    <property type="entry name" value="DNA_mismatch_repair_MutS_C"/>
</dbReference>
<dbReference type="InterPro" id="IPR007861">
    <property type="entry name" value="DNA_mismatch_repair_MutS_clamp"/>
</dbReference>
<dbReference type="InterPro" id="IPR007696">
    <property type="entry name" value="DNA_mismatch_repair_MutS_core"/>
</dbReference>
<dbReference type="InterPro" id="IPR016151">
    <property type="entry name" value="DNA_mismatch_repair_MutS_N"/>
</dbReference>
<dbReference type="InterPro" id="IPR036187">
    <property type="entry name" value="DNA_mismatch_repair_MutS_sf"/>
</dbReference>
<dbReference type="InterPro" id="IPR007860">
    <property type="entry name" value="DNA_mmatch_repair_MutS_con_dom"/>
</dbReference>
<dbReference type="InterPro" id="IPR045076">
    <property type="entry name" value="MutS"/>
</dbReference>
<dbReference type="InterPro" id="IPR036678">
    <property type="entry name" value="MutS_con_dom_sf"/>
</dbReference>
<dbReference type="InterPro" id="IPR027417">
    <property type="entry name" value="P-loop_NTPase"/>
</dbReference>
<dbReference type="NCBIfam" id="TIGR01070">
    <property type="entry name" value="mutS1"/>
    <property type="match status" value="1"/>
</dbReference>
<dbReference type="NCBIfam" id="NF003810">
    <property type="entry name" value="PRK05399.1"/>
    <property type="match status" value="1"/>
</dbReference>
<dbReference type="PANTHER" id="PTHR11361:SF34">
    <property type="entry name" value="DNA MISMATCH REPAIR PROTEIN MSH1, MITOCHONDRIAL"/>
    <property type="match status" value="1"/>
</dbReference>
<dbReference type="PANTHER" id="PTHR11361">
    <property type="entry name" value="DNA MISMATCH REPAIR PROTEIN MUTS FAMILY MEMBER"/>
    <property type="match status" value="1"/>
</dbReference>
<dbReference type="Pfam" id="PF01624">
    <property type="entry name" value="MutS_I"/>
    <property type="match status" value="1"/>
</dbReference>
<dbReference type="Pfam" id="PF05188">
    <property type="entry name" value="MutS_II"/>
    <property type="match status" value="1"/>
</dbReference>
<dbReference type="Pfam" id="PF05192">
    <property type="entry name" value="MutS_III"/>
    <property type="match status" value="1"/>
</dbReference>
<dbReference type="Pfam" id="PF05190">
    <property type="entry name" value="MutS_IV"/>
    <property type="match status" value="1"/>
</dbReference>
<dbReference type="Pfam" id="PF00488">
    <property type="entry name" value="MutS_V"/>
    <property type="match status" value="1"/>
</dbReference>
<dbReference type="PIRSF" id="PIRSF037677">
    <property type="entry name" value="DNA_mis_repair_Msh6"/>
    <property type="match status" value="1"/>
</dbReference>
<dbReference type="SMART" id="SM00534">
    <property type="entry name" value="MUTSac"/>
    <property type="match status" value="1"/>
</dbReference>
<dbReference type="SMART" id="SM00533">
    <property type="entry name" value="MUTSd"/>
    <property type="match status" value="1"/>
</dbReference>
<dbReference type="SUPFAM" id="SSF55271">
    <property type="entry name" value="DNA repair protein MutS, domain I"/>
    <property type="match status" value="1"/>
</dbReference>
<dbReference type="SUPFAM" id="SSF53150">
    <property type="entry name" value="DNA repair protein MutS, domain II"/>
    <property type="match status" value="1"/>
</dbReference>
<dbReference type="SUPFAM" id="SSF48334">
    <property type="entry name" value="DNA repair protein MutS, domain III"/>
    <property type="match status" value="1"/>
</dbReference>
<dbReference type="SUPFAM" id="SSF52540">
    <property type="entry name" value="P-loop containing nucleoside triphosphate hydrolases"/>
    <property type="match status" value="1"/>
</dbReference>
<dbReference type="PROSITE" id="PS00486">
    <property type="entry name" value="DNA_MISMATCH_REPAIR_2"/>
    <property type="match status" value="1"/>
</dbReference>
<feature type="chain" id="PRO_0000224380" description="DNA mismatch repair protein MutS">
    <location>
        <begin position="1"/>
        <end position="846"/>
    </location>
</feature>
<feature type="binding site" evidence="1">
    <location>
        <begin position="610"/>
        <end position="617"/>
    </location>
    <ligand>
        <name>ATP</name>
        <dbReference type="ChEBI" id="CHEBI:30616"/>
    </ligand>
</feature>
<keyword id="KW-0067">ATP-binding</keyword>
<keyword id="KW-0227">DNA damage</keyword>
<keyword id="KW-0234">DNA repair</keyword>
<keyword id="KW-0238">DNA-binding</keyword>
<keyword id="KW-0547">Nucleotide-binding</keyword>
<protein>
    <recommendedName>
        <fullName evidence="1">DNA mismatch repair protein MutS</fullName>
    </recommendedName>
</protein>
<sequence length="846" mass="94808">MSSSHTPMMQQYLRIKTDYPDMLLFYRMGDFYELFFDDAKRASQLLDLTLTHRGQSADKPIPMAGVPYHAVENYLARLLKKGESVAICEQIGDPATSKGPVERQVTRIITPGTVTDEALLDARKDNILLAIHTQKQKIGIAWVDLGGGRFHLQELTEEHQLNAELVRLQPAELLCKESTPLPSFCSNFAVKFRPGWEFDASNAHKLLCEQFSVTDLSAFGEQNYPTALIAAGALLAYLKTTQKQSLPHLTTLTLEQSEDYLQLDASTQKHLELFENIHGGGEHCLLSILDKTACAMGSRLLKRWLGKPLKQHAIIQTRQQAIKEIIFLQQDVSLHQLIKQCADVERIVSRIALKSARPRDLVSLLQTLTLLPAIHDELQENKSLLINEIKKEISPLPLLQQLLETAIIDNPPMLIRDGGVIAPGFDEELDELRNLSSNAHETLVKLEQEEKNRTGLSTLKLGYNSVQGFYIELSKAQAQNAPPHFHRKQTLKNVERYITPELKLFEDKVLSAQSKALAREKWLYDNLLEEIQQYIPELSDLAKSLAQLDVLVTLAERAQSLNWNCPNLVPESGIMIQAGRHPVIEPLLQERFIANDLELKPNQNMLLITGPNMGGKSTYMRQTALIVLLSHIGSFVPADEVTLGPLDRIFTRIGASDDLSSGRSTFMVEMTETAQILRQATSQSLVLIDEIGRGTSTYDGMALAYASCAFLASTIKAYTLFSTHYLELTELPKEFSCIRNVHLQASIKTGQIVFLYRVEEGCANRSYGLEVAELAGIPKEVLKLAHEHLNQIQDTQSILVQTQIIKPPTSPVLTELKKIDPDRLTAKEALDLIYKLKHLECAESIN</sequence>
<proteinExistence type="inferred from homology"/>
<organism>
    <name type="scientific">Legionella pneumophila (strain Paris)</name>
    <dbReference type="NCBI Taxonomy" id="297246"/>
    <lineage>
        <taxon>Bacteria</taxon>
        <taxon>Pseudomonadati</taxon>
        <taxon>Pseudomonadota</taxon>
        <taxon>Gammaproteobacteria</taxon>
        <taxon>Legionellales</taxon>
        <taxon>Legionellaceae</taxon>
        <taxon>Legionella</taxon>
    </lineage>
</organism>
<reference key="1">
    <citation type="journal article" date="2004" name="Nat. Genet.">
        <title>Evidence in the Legionella pneumophila genome for exploitation of host cell functions and high genome plasticity.</title>
        <authorList>
            <person name="Cazalet C."/>
            <person name="Rusniok C."/>
            <person name="Brueggemann H."/>
            <person name="Zidane N."/>
            <person name="Magnier A."/>
            <person name="Ma L."/>
            <person name="Tichit M."/>
            <person name="Jarraud S."/>
            <person name="Bouchier C."/>
            <person name="Vandenesch F."/>
            <person name="Kunst F."/>
            <person name="Etienne J."/>
            <person name="Glaser P."/>
            <person name="Buchrieser C."/>
        </authorList>
    </citation>
    <scope>NUCLEOTIDE SEQUENCE [LARGE SCALE GENOMIC DNA]</scope>
    <source>
        <strain>Paris</strain>
    </source>
</reference>
<comment type="function">
    <text evidence="1">This protein is involved in the repair of mismatches in DNA. It is possible that it carries out the mismatch recognition step. This protein has a weak ATPase activity.</text>
</comment>
<comment type="similarity">
    <text evidence="1">Belongs to the DNA mismatch repair MutS family.</text>
</comment>
<name>MUTS_LEGPA</name>
<accession>Q5X4B2</accession>